<dbReference type="EC" id="2.4.1.313" evidence="6"/>
<dbReference type="EMBL" id="AL135928">
    <property type="protein sequence ID" value="CAI21727.1"/>
    <property type="molecule type" value="Genomic_DNA"/>
</dbReference>
<dbReference type="EMBL" id="AL135928">
    <property type="protein sequence ID" value="CAI21728.1"/>
    <property type="molecule type" value="Genomic_DNA"/>
</dbReference>
<dbReference type="EMBL" id="BC016974">
    <property type="protein sequence ID" value="AAH16974.1"/>
    <property type="status" value="ALT_INIT"/>
    <property type="molecule type" value="mRNA"/>
</dbReference>
<dbReference type="EMBL" id="BC029564">
    <property type="protein sequence ID" value="AAH29564.1"/>
    <property type="molecule type" value="mRNA"/>
</dbReference>
<dbReference type="EMBL" id="AB209046">
    <property type="protein sequence ID" value="BAD92283.1"/>
    <property type="molecule type" value="mRNA"/>
</dbReference>
<dbReference type="CCDS" id="CCDS1606.1">
    <molecule id="Q8NCR0-1"/>
</dbReference>
<dbReference type="CCDS" id="CCDS60453.1">
    <molecule id="Q8NCR0-2"/>
</dbReference>
<dbReference type="RefSeq" id="NP_001264084.1">
    <molecule id="Q8NCR0-2"/>
    <property type="nucleotide sequence ID" value="NM_001277155.3"/>
</dbReference>
<dbReference type="RefSeq" id="NP_689703.1">
    <molecule id="Q8NCR0-1"/>
    <property type="nucleotide sequence ID" value="NM_152490.5"/>
</dbReference>
<dbReference type="SMR" id="Q8NCR0"/>
<dbReference type="BioGRID" id="127169">
    <property type="interactions" value="65"/>
</dbReference>
<dbReference type="FunCoup" id="Q8NCR0">
    <property type="interactions" value="1056"/>
</dbReference>
<dbReference type="IntAct" id="Q8NCR0">
    <property type="interactions" value="18"/>
</dbReference>
<dbReference type="STRING" id="9606.ENSP00000355559"/>
<dbReference type="CAZy" id="GT31">
    <property type="family name" value="Glycosyltransferase Family 31"/>
</dbReference>
<dbReference type="GlyCosmos" id="Q8NCR0">
    <property type="glycosylation" value="2 sites, No reported glycans"/>
</dbReference>
<dbReference type="GlyGen" id="Q8NCR0">
    <property type="glycosylation" value="2 sites, 1 N-linked glycan (1 site)"/>
</dbReference>
<dbReference type="iPTMnet" id="Q8NCR0"/>
<dbReference type="PhosphoSitePlus" id="Q8NCR0"/>
<dbReference type="BioMuta" id="B3GALNT2"/>
<dbReference type="DMDM" id="74751196"/>
<dbReference type="jPOST" id="Q8NCR0"/>
<dbReference type="MassIVE" id="Q8NCR0"/>
<dbReference type="PaxDb" id="9606-ENSP00000355559"/>
<dbReference type="PeptideAtlas" id="Q8NCR0"/>
<dbReference type="ProteomicsDB" id="72925">
    <molecule id="Q8NCR0-1"/>
</dbReference>
<dbReference type="ProteomicsDB" id="72926">
    <molecule id="Q8NCR0-2"/>
</dbReference>
<dbReference type="TopDownProteomics" id="Q8NCR0-2">
    <molecule id="Q8NCR0-2"/>
</dbReference>
<dbReference type="Antibodypedia" id="1593">
    <property type="antibodies" value="120 antibodies from 21 providers"/>
</dbReference>
<dbReference type="DNASU" id="148789"/>
<dbReference type="Ensembl" id="ENST00000313984.3">
    <molecule id="Q8NCR0-2"/>
    <property type="protein sequence ID" value="ENSP00000315678.3"/>
    <property type="gene ID" value="ENSG00000162885.14"/>
</dbReference>
<dbReference type="Ensembl" id="ENST00000366600.8">
    <molecule id="Q8NCR0-1"/>
    <property type="protein sequence ID" value="ENSP00000355559.3"/>
    <property type="gene ID" value="ENSG00000162885.14"/>
</dbReference>
<dbReference type="Ensembl" id="ENST00000635244.1">
    <molecule id="Q8NCR0-2"/>
    <property type="protein sequence ID" value="ENSP00000489219.1"/>
    <property type="gene ID" value="ENSG00000282880.5"/>
</dbReference>
<dbReference type="Ensembl" id="ENST00000635453.2">
    <molecule id="Q8NCR0-1"/>
    <property type="protein sequence ID" value="ENSP00000489342.1"/>
    <property type="gene ID" value="ENSG00000282880.5"/>
</dbReference>
<dbReference type="GeneID" id="148789"/>
<dbReference type="KEGG" id="hsa:148789"/>
<dbReference type="MANE-Select" id="ENST00000366600.8">
    <property type="protein sequence ID" value="ENSP00000355559.3"/>
    <property type="RefSeq nucleotide sequence ID" value="NM_152490.5"/>
    <property type="RefSeq protein sequence ID" value="NP_689703.1"/>
</dbReference>
<dbReference type="UCSC" id="uc001hxc.4">
    <molecule id="Q8NCR0-1"/>
    <property type="organism name" value="human"/>
</dbReference>
<dbReference type="AGR" id="HGNC:28596"/>
<dbReference type="CTD" id="148789"/>
<dbReference type="DisGeNET" id="148789"/>
<dbReference type="GeneCards" id="B3GALNT2"/>
<dbReference type="HGNC" id="HGNC:28596">
    <property type="gene designation" value="B3GALNT2"/>
</dbReference>
<dbReference type="HPA" id="ENSG00000162885">
    <property type="expression patterns" value="Low tissue specificity"/>
</dbReference>
<dbReference type="MalaCards" id="B3GALNT2"/>
<dbReference type="MIM" id="610194">
    <property type="type" value="gene"/>
</dbReference>
<dbReference type="MIM" id="615181">
    <property type="type" value="phenotype"/>
</dbReference>
<dbReference type="neXtProt" id="NX_Q8NCR0"/>
<dbReference type="OpenTargets" id="ENSG00000162885"/>
<dbReference type="Orphanet" id="88616">
    <property type="disease" value="Autosomal recessive non-syndromic intellectual disability"/>
</dbReference>
<dbReference type="Orphanet" id="588">
    <property type="disease" value="Muscle-eye-brain disease"/>
</dbReference>
<dbReference type="Orphanet" id="899">
    <property type="disease" value="Walker-Warburg syndrome"/>
</dbReference>
<dbReference type="PharmGKB" id="PA142672567"/>
<dbReference type="VEuPathDB" id="HostDB:ENSG00000162885"/>
<dbReference type="eggNOG" id="KOG2287">
    <property type="taxonomic scope" value="Eukaryota"/>
</dbReference>
<dbReference type="GeneTree" id="ENSGT00940000156562"/>
<dbReference type="HOGENOM" id="CLU_591287_0_0_1"/>
<dbReference type="InParanoid" id="Q8NCR0"/>
<dbReference type="OrthoDB" id="2139606at2759"/>
<dbReference type="PAN-GO" id="Q8NCR0">
    <property type="GO annotations" value="2 GO annotations based on evolutionary models"/>
</dbReference>
<dbReference type="PhylomeDB" id="Q8NCR0"/>
<dbReference type="TreeFam" id="TF314311"/>
<dbReference type="BioCyc" id="MetaCyc:ENSG00000162885-MONOMER"/>
<dbReference type="BRENDA" id="2.4.1.313">
    <property type="organism ID" value="2681"/>
</dbReference>
<dbReference type="PathwayCommons" id="Q8NCR0"/>
<dbReference type="Reactome" id="R-HSA-5173105">
    <property type="pathway name" value="O-linked glycosylation"/>
</dbReference>
<dbReference type="SABIO-RK" id="Q8NCR0"/>
<dbReference type="SignaLink" id="Q8NCR0"/>
<dbReference type="UniPathway" id="UPA00378"/>
<dbReference type="BioGRID-ORCS" id="148789">
    <property type="hits" value="10 hits in 1152 CRISPR screens"/>
</dbReference>
<dbReference type="ChiTaRS" id="B3GALNT2">
    <property type="organism name" value="human"/>
</dbReference>
<dbReference type="GenomeRNAi" id="148789"/>
<dbReference type="Pharos" id="Q8NCR0">
    <property type="development level" value="Tbio"/>
</dbReference>
<dbReference type="PRO" id="PR:Q8NCR0"/>
<dbReference type="Proteomes" id="UP000005640">
    <property type="component" value="Chromosome 1"/>
</dbReference>
<dbReference type="RNAct" id="Q8NCR0">
    <property type="molecule type" value="protein"/>
</dbReference>
<dbReference type="Bgee" id="ENSG00000162885">
    <property type="expression patterns" value="Expressed in body of pancreas and 106 other cell types or tissues"/>
</dbReference>
<dbReference type="ExpressionAtlas" id="Q8NCR0">
    <property type="expression patterns" value="baseline and differential"/>
</dbReference>
<dbReference type="GO" id="GO:0005783">
    <property type="term" value="C:endoplasmic reticulum"/>
    <property type="evidence" value="ECO:0000314"/>
    <property type="project" value="UniProtKB"/>
</dbReference>
<dbReference type="GO" id="GO:0005789">
    <property type="term" value="C:endoplasmic reticulum membrane"/>
    <property type="evidence" value="ECO:0000304"/>
    <property type="project" value="Reactome"/>
</dbReference>
<dbReference type="GO" id="GO:0000139">
    <property type="term" value="C:Golgi membrane"/>
    <property type="evidence" value="ECO:0000318"/>
    <property type="project" value="GO_Central"/>
</dbReference>
<dbReference type="GO" id="GO:0008376">
    <property type="term" value="F:acetylgalactosaminyltransferase activity"/>
    <property type="evidence" value="ECO:0000314"/>
    <property type="project" value="UniProtKB"/>
</dbReference>
<dbReference type="GO" id="GO:0008194">
    <property type="term" value="F:UDP-glycosyltransferase activity"/>
    <property type="evidence" value="ECO:0000318"/>
    <property type="project" value="GO_Central"/>
</dbReference>
<dbReference type="GO" id="GO:0006486">
    <property type="term" value="P:protein glycosylation"/>
    <property type="evidence" value="ECO:0000315"/>
    <property type="project" value="UniProtKB"/>
</dbReference>
<dbReference type="GO" id="GO:0006493">
    <property type="term" value="P:protein O-linked glycosylation"/>
    <property type="evidence" value="ECO:0000314"/>
    <property type="project" value="UniProtKB"/>
</dbReference>
<dbReference type="FunFam" id="3.90.550.50:FF:000013">
    <property type="entry name" value="Hexosyltransferase"/>
    <property type="match status" value="1"/>
</dbReference>
<dbReference type="Gene3D" id="3.90.550.50">
    <property type="match status" value="1"/>
</dbReference>
<dbReference type="InterPro" id="IPR002659">
    <property type="entry name" value="Glyco_trans_31"/>
</dbReference>
<dbReference type="PANTHER" id="PTHR11214">
    <property type="entry name" value="BETA-1,3-N-ACETYLGLUCOSAMINYLTRANSFERASE"/>
    <property type="match status" value="1"/>
</dbReference>
<dbReference type="PANTHER" id="PTHR11214:SF219">
    <property type="entry name" value="UDP-GALNAC:BETA-1,3-N-ACETYLGALACTOSAMINYLTRANSFERASE 2"/>
    <property type="match status" value="1"/>
</dbReference>
<dbReference type="Pfam" id="PF01762">
    <property type="entry name" value="Galactosyl_T"/>
    <property type="match status" value="1"/>
</dbReference>
<feature type="chain" id="PRO_0000248362" description="UDP-GalNAc:beta-1,3-N-acetylgalactosaminyltransferase 2">
    <location>
        <begin position="1"/>
        <end position="500"/>
    </location>
</feature>
<feature type="topological domain" description="Cytoplasmic" evidence="2">
    <location>
        <begin position="1"/>
        <end position="6"/>
    </location>
</feature>
<feature type="transmembrane region" description="Helical; Signal-anchor for type II membrane protein" evidence="2">
    <location>
        <begin position="7"/>
        <end position="23"/>
    </location>
</feature>
<feature type="topological domain" description="Lumenal" evidence="2">
    <location>
        <begin position="24"/>
        <end position="500"/>
    </location>
</feature>
<feature type="glycosylation site" description="N-linked (GlcNAc...) asparagine" evidence="2">
    <location>
        <position position="116"/>
    </location>
</feature>
<feature type="glycosylation site" description="N-linked (GlcNAc...) asparagine" evidence="2">
    <location>
        <position position="174"/>
    </location>
</feature>
<feature type="splice variant" id="VSP_020250" description="In isoform 2." evidence="7">
    <original>A</original>
    <variation>AGGVSLLLPRLECNGAVSAHPNLHLPGSRDSPASASQVAGIT</variation>
    <location>
        <position position="37"/>
    </location>
</feature>
<feature type="splice variant" id="VSP_020251" description="In isoform 2." evidence="7">
    <original>EGDAL</original>
    <variation>GKFAS</variation>
    <location>
        <begin position="281"/>
        <end position="285"/>
    </location>
</feature>
<feature type="splice variant" id="VSP_020252" description="In isoform 2." evidence="7">
    <location>
        <begin position="286"/>
        <end position="500"/>
    </location>
</feature>
<feature type="sequence variant" id="VAR_035860" description="In a breast cancer sample; somatic mutation." evidence="4">
    <original>N</original>
    <variation>S</variation>
    <location>
        <position position="203"/>
    </location>
</feature>
<feature type="sequence variant" id="VAR_069638" description="In MDDGA11; affects subcellular localization; dbSNP:rs367543072." evidence="5">
    <original>G</original>
    <variation>E</variation>
    <location>
        <position position="247"/>
    </location>
</feature>
<feature type="sequence variant" id="VAR_069639" description="In MDDGA11; dbSNP:rs367543073." evidence="5">
    <original>V</original>
    <variation>G</variation>
    <location>
        <position position="252"/>
    </location>
</feature>
<feature type="sequence variant" id="VAR_069640" description="In MDDGA11; affects subcellular localization; dbSNP:rs367543074." evidence="5">
    <original>V</original>
    <variation>M</variation>
    <location>
        <position position="268"/>
    </location>
</feature>
<feature type="sequence variant" id="VAR_069641" description="In MDDGA11; does not affect subcellular localization; dbSNP:rs367543076." evidence="5">
    <original>R</original>
    <variation>P</variation>
    <location>
        <position position="292"/>
    </location>
</feature>
<keyword id="KW-0025">Alternative splicing</keyword>
<keyword id="KW-0912">Congenital muscular dystrophy</keyword>
<keyword id="KW-0225">Disease variant</keyword>
<keyword id="KW-1215">Dystroglycanopathy</keyword>
<keyword id="KW-0256">Endoplasmic reticulum</keyword>
<keyword id="KW-0325">Glycoprotein</keyword>
<keyword id="KW-0328">Glycosyltransferase</keyword>
<keyword id="KW-0333">Golgi apparatus</keyword>
<keyword id="KW-0451">Lissencephaly</keyword>
<keyword id="KW-0472">Membrane</keyword>
<keyword id="KW-1267">Proteomics identification</keyword>
<keyword id="KW-1185">Reference proteome</keyword>
<keyword id="KW-0735">Signal-anchor</keyword>
<keyword id="KW-0808">Transferase</keyword>
<keyword id="KW-0812">Transmembrane</keyword>
<keyword id="KW-1133">Transmembrane helix</keyword>
<comment type="function">
    <text evidence="3 5 6">Beta-1,3-N-acetylgalactosaminyltransferase that synthesizes a unique carbohydrate structure, GalNAc-beta-1-3GlcNAc, on N- and O-glycans. Has no galactose nor galactosaminyl transferase activity toward any acceptor substrate. Involved in alpha-dystroglycan (DAG1) glycosylation: acts coordinately with GTDC2/POMGnT2 to synthesize a GalNAc-beta3-GlcNAc-beta-terminus at the 4-position of protein O-mannose in the biosynthesis of the phosphorylated O-mannosyl trisaccharide (N-acetylgalactosamine-beta-3-N-acetylglucosamine-beta-4-(phosphate-6-)mannose), a carbohydrate structure present in alpha-dystroglycan, which is required for binding laminin G-like domain-containing extracellular proteins with high affinity.</text>
</comment>
<comment type="catalytic activity">
    <reaction evidence="6">
        <text>3-O-(N-acetyl-beta-D-glucosaminyl-(1-&gt;4)-alpha-D-mannosyl)-L-threonyl-[protein] + UDP-N-acetyl-alpha-D-galactosamine = 3-O-[beta-D-GalNAc-(1-&gt;3)-beta-D-GlcNAc-(1-&gt;4)-alpha-D-Man]-L-Thr-[protein] + UDP + H(+)</text>
        <dbReference type="Rhea" id="RHEA:37667"/>
        <dbReference type="Rhea" id="RHEA-COMP:13308"/>
        <dbReference type="Rhea" id="RHEA-COMP:13618"/>
        <dbReference type="ChEBI" id="CHEBI:15378"/>
        <dbReference type="ChEBI" id="CHEBI:58223"/>
        <dbReference type="ChEBI" id="CHEBI:67138"/>
        <dbReference type="ChEBI" id="CHEBI:136709"/>
        <dbReference type="ChEBI" id="CHEBI:137540"/>
        <dbReference type="EC" id="2.4.1.313"/>
    </reaction>
</comment>
<comment type="biophysicochemical properties">
    <kinetics>
        <KM evidence="3">5.4 uM for UDP-GalNAc</KM>
        <KM evidence="3">11 mM for GlcNAc-beta-Bn</KM>
    </kinetics>
</comment>
<comment type="pathway">
    <text>Protein modification; protein glycosylation.</text>
</comment>
<comment type="interaction">
    <interactant intactId="EBI-12934759">
        <id>Q8NCR0</id>
    </interactant>
    <interactant intactId="EBI-2820569">
        <id>Q969X1</id>
        <label>TMBIM1</label>
    </interactant>
    <organismsDiffer>false</organismsDiffer>
    <experiments>3</experiments>
</comment>
<comment type="subcellular location">
    <subcellularLocation>
        <location evidence="1">Golgi apparatus membrane</location>
        <topology evidence="1">Single-pass type II membrane protein</topology>
    </subcellularLocation>
    <subcellularLocation>
        <location evidence="5">Endoplasmic reticulum</location>
    </subcellularLocation>
</comment>
<comment type="alternative products">
    <event type="alternative splicing"/>
    <isoform>
        <id>Q8NCR0-1</id>
        <name>1</name>
        <sequence type="displayed"/>
    </isoform>
    <isoform>
        <id>Q8NCR0-2</id>
        <name>2</name>
        <sequence type="described" ref="VSP_020250 VSP_020251 VSP_020252"/>
    </isoform>
</comment>
<comment type="tissue specificity">
    <text evidence="3">Expressed in all tissues examined, but at highest levels in testis, adipose tissue, skeletal muscle and ovary.</text>
</comment>
<comment type="PTM">
    <text evidence="9">N-glycosylated.</text>
</comment>
<comment type="disease" evidence="5">
    <disease id="DI-03747">
        <name>Muscular dystrophy-dystroglycanopathy congenital with brain and eye anomalies A11</name>
        <acronym>MDDGA11</acronym>
        <description>An autosomal recessive disorder characterized by congenital muscular dystrophy associated with cobblestone lissencephaly and other brain anomalies, eye malformations, profound intellectual disability, and death usually in the first years of life. Included diseases are the more severe Walker-Warburg syndrome and the slightly less severe muscle-eye-brain disease.</description>
        <dbReference type="MIM" id="615181"/>
    </disease>
    <text>The disease is caused by variants affecting the gene represented in this entry.</text>
</comment>
<comment type="similarity">
    <text evidence="8">Belongs to the glycosyltransferase 31 family.</text>
</comment>
<comment type="sequence caution" evidence="8">
    <conflict type="erroneous initiation">
        <sequence resource="EMBL-CDS" id="AAH16974"/>
    </conflict>
</comment>
<gene>
    <name type="primary">B3GALNT2</name>
</gene>
<reference key="1">
    <citation type="journal article" date="2006" name="Nature">
        <title>The DNA sequence and biological annotation of human chromosome 1.</title>
        <authorList>
            <person name="Gregory S.G."/>
            <person name="Barlow K.F."/>
            <person name="McLay K.E."/>
            <person name="Kaul R."/>
            <person name="Swarbreck D."/>
            <person name="Dunham A."/>
            <person name="Scott C.E."/>
            <person name="Howe K.L."/>
            <person name="Woodfine K."/>
            <person name="Spencer C.C.A."/>
            <person name="Jones M.C."/>
            <person name="Gillson C."/>
            <person name="Searle S."/>
            <person name="Zhou Y."/>
            <person name="Kokocinski F."/>
            <person name="McDonald L."/>
            <person name="Evans R."/>
            <person name="Phillips K."/>
            <person name="Atkinson A."/>
            <person name="Cooper R."/>
            <person name="Jones C."/>
            <person name="Hall R.E."/>
            <person name="Andrews T.D."/>
            <person name="Lloyd C."/>
            <person name="Ainscough R."/>
            <person name="Almeida J.P."/>
            <person name="Ambrose K.D."/>
            <person name="Anderson F."/>
            <person name="Andrew R.W."/>
            <person name="Ashwell R.I.S."/>
            <person name="Aubin K."/>
            <person name="Babbage A.K."/>
            <person name="Bagguley C.L."/>
            <person name="Bailey J."/>
            <person name="Beasley H."/>
            <person name="Bethel G."/>
            <person name="Bird C.P."/>
            <person name="Bray-Allen S."/>
            <person name="Brown J.Y."/>
            <person name="Brown A.J."/>
            <person name="Buckley D."/>
            <person name="Burton J."/>
            <person name="Bye J."/>
            <person name="Carder C."/>
            <person name="Chapman J.C."/>
            <person name="Clark S.Y."/>
            <person name="Clarke G."/>
            <person name="Clee C."/>
            <person name="Cobley V."/>
            <person name="Collier R.E."/>
            <person name="Corby N."/>
            <person name="Coville G.J."/>
            <person name="Davies J."/>
            <person name="Deadman R."/>
            <person name="Dunn M."/>
            <person name="Earthrowl M."/>
            <person name="Ellington A.G."/>
            <person name="Errington H."/>
            <person name="Frankish A."/>
            <person name="Frankland J."/>
            <person name="French L."/>
            <person name="Garner P."/>
            <person name="Garnett J."/>
            <person name="Gay L."/>
            <person name="Ghori M.R.J."/>
            <person name="Gibson R."/>
            <person name="Gilby L.M."/>
            <person name="Gillett W."/>
            <person name="Glithero R.J."/>
            <person name="Grafham D.V."/>
            <person name="Griffiths C."/>
            <person name="Griffiths-Jones S."/>
            <person name="Grocock R."/>
            <person name="Hammond S."/>
            <person name="Harrison E.S.I."/>
            <person name="Hart E."/>
            <person name="Haugen E."/>
            <person name="Heath P.D."/>
            <person name="Holmes S."/>
            <person name="Holt K."/>
            <person name="Howden P.J."/>
            <person name="Hunt A.R."/>
            <person name="Hunt S.E."/>
            <person name="Hunter G."/>
            <person name="Isherwood J."/>
            <person name="James R."/>
            <person name="Johnson C."/>
            <person name="Johnson D."/>
            <person name="Joy A."/>
            <person name="Kay M."/>
            <person name="Kershaw J.K."/>
            <person name="Kibukawa M."/>
            <person name="Kimberley A.M."/>
            <person name="King A."/>
            <person name="Knights A.J."/>
            <person name="Lad H."/>
            <person name="Laird G."/>
            <person name="Lawlor S."/>
            <person name="Leongamornlert D.A."/>
            <person name="Lloyd D.M."/>
            <person name="Loveland J."/>
            <person name="Lovell J."/>
            <person name="Lush M.J."/>
            <person name="Lyne R."/>
            <person name="Martin S."/>
            <person name="Mashreghi-Mohammadi M."/>
            <person name="Matthews L."/>
            <person name="Matthews N.S.W."/>
            <person name="McLaren S."/>
            <person name="Milne S."/>
            <person name="Mistry S."/>
            <person name="Moore M.J.F."/>
            <person name="Nickerson T."/>
            <person name="O'Dell C.N."/>
            <person name="Oliver K."/>
            <person name="Palmeiri A."/>
            <person name="Palmer S.A."/>
            <person name="Parker A."/>
            <person name="Patel D."/>
            <person name="Pearce A.V."/>
            <person name="Peck A.I."/>
            <person name="Pelan S."/>
            <person name="Phelps K."/>
            <person name="Phillimore B.J."/>
            <person name="Plumb R."/>
            <person name="Rajan J."/>
            <person name="Raymond C."/>
            <person name="Rouse G."/>
            <person name="Saenphimmachak C."/>
            <person name="Sehra H.K."/>
            <person name="Sheridan E."/>
            <person name="Shownkeen R."/>
            <person name="Sims S."/>
            <person name="Skuce C.D."/>
            <person name="Smith M."/>
            <person name="Steward C."/>
            <person name="Subramanian S."/>
            <person name="Sycamore N."/>
            <person name="Tracey A."/>
            <person name="Tromans A."/>
            <person name="Van Helmond Z."/>
            <person name="Wall M."/>
            <person name="Wallis J.M."/>
            <person name="White S."/>
            <person name="Whitehead S.L."/>
            <person name="Wilkinson J.E."/>
            <person name="Willey D.L."/>
            <person name="Williams H."/>
            <person name="Wilming L."/>
            <person name="Wray P.W."/>
            <person name="Wu Z."/>
            <person name="Coulson A."/>
            <person name="Vaudin M."/>
            <person name="Sulston J.E."/>
            <person name="Durbin R.M."/>
            <person name="Hubbard T."/>
            <person name="Wooster R."/>
            <person name="Dunham I."/>
            <person name="Carter N.P."/>
            <person name="McVean G."/>
            <person name="Ross M.T."/>
            <person name="Harrow J."/>
            <person name="Olson M.V."/>
            <person name="Beck S."/>
            <person name="Rogers J."/>
            <person name="Bentley D.R."/>
        </authorList>
    </citation>
    <scope>NUCLEOTIDE SEQUENCE [LARGE SCALE GENOMIC DNA]</scope>
</reference>
<reference key="2">
    <citation type="journal article" date="2004" name="Genome Res.">
        <title>The status, quality, and expansion of the NIH full-length cDNA project: the Mammalian Gene Collection (MGC).</title>
        <authorList>
            <consortium name="The MGC Project Team"/>
        </authorList>
    </citation>
    <scope>NUCLEOTIDE SEQUENCE [LARGE SCALE MRNA] (ISOFORMS 1 AND 2)</scope>
    <source>
        <tissue>Mammary gland</tissue>
        <tissue>Testis</tissue>
    </source>
</reference>
<reference key="3">
    <citation type="submission" date="2005-03" db="EMBL/GenBank/DDBJ databases">
        <authorList>
            <person name="Totoki Y."/>
            <person name="Toyoda A."/>
            <person name="Takeda T."/>
            <person name="Sakaki Y."/>
            <person name="Tanaka A."/>
            <person name="Yokoyama S."/>
            <person name="Ohara O."/>
            <person name="Nagase T."/>
            <person name="Kikuno R.F."/>
        </authorList>
    </citation>
    <scope>NUCLEOTIDE SEQUENCE [LARGE SCALE MRNA] OF 74-500 (ISOFORM 1)</scope>
    <source>
        <tissue>Brain</tissue>
    </source>
</reference>
<reference key="4">
    <citation type="journal article" date="2004" name="J. Biol. Chem.">
        <title>A novel human beta1,3-N-acetylgalactosaminyltransferase that synthesizes a unique carbohydrate structure, GalNAcbeta1-3GlcNAc.</title>
        <authorList>
            <person name="Hiruma T."/>
            <person name="Togayachi A."/>
            <person name="Okamura K."/>
            <person name="Sato T."/>
            <person name="Kikuchi N."/>
            <person name="Kwon Y.D."/>
            <person name="Nakamura A."/>
            <person name="Fujimura K."/>
            <person name="Gotoh M."/>
            <person name="Tachibana K."/>
            <person name="Ishizuka Y."/>
            <person name="Noce T."/>
            <person name="Nakanishi H."/>
            <person name="Narimatsu H."/>
        </authorList>
    </citation>
    <scope>FUNCTION</scope>
    <scope>BIOPHYSICOCHEMICAL PROPERTIES</scope>
    <scope>GLYCOSYLATION</scope>
    <scope>TISSUE SPECIFICITY</scope>
</reference>
<reference key="5">
    <citation type="journal article" date="2013" name="Am. J. Hum. Genet.">
        <title>Mutations in B3GALNT2 cause congenital muscular dystrophy and hypoglycosylation of alpha-dystroglycan.</title>
        <authorList>
            <consortium name="UK10K Consortium"/>
            <person name="Stevens E."/>
            <person name="Carss K.J."/>
            <person name="Cirak S."/>
            <person name="Foley A.R."/>
            <person name="Torelli S."/>
            <person name="Willer T."/>
            <person name="Tambunan D.E."/>
            <person name="Yau S."/>
            <person name="Brodd L."/>
            <person name="Sewry C.A."/>
            <person name="Feng L."/>
            <person name="Haliloglu G."/>
            <person name="Orhan D."/>
            <person name="Dobyns W.B."/>
            <person name="Enns G.M."/>
            <person name="Manning M."/>
            <person name="Krause A."/>
            <person name="Salih M.A."/>
            <person name="Walsh C.A."/>
            <person name="Hurles M."/>
            <person name="Campbell K.P."/>
            <person name="Manzini M.C."/>
            <person name="Stemple D."/>
            <person name="Lin Y.Y."/>
            <person name="Muntoni F."/>
        </authorList>
    </citation>
    <scope>FUNCTION</scope>
    <scope>SUBCELLULAR LOCATION</scope>
    <scope>VARIANTS MDDGA11 GLU-247; GLY-252; MET-268 AND PRO-292</scope>
    <scope>CHARACTERIZATION OF VARIANTS MDDGA11 GLU-247; MET-268 AND PRO-292</scope>
</reference>
<reference key="6">
    <citation type="journal article" date="2013" name="Science">
        <title>SGK196 is a glycosylation-specific O-mannose kinase required for dystroglycan function.</title>
        <authorList>
            <person name="Yoshida-Moriguchi T."/>
            <person name="Willer T."/>
            <person name="Anderson M.E."/>
            <person name="Venzke D."/>
            <person name="Whyte T."/>
            <person name="Muntoni F."/>
            <person name="Lee H."/>
            <person name="Nelson S.F."/>
            <person name="Yu L."/>
            <person name="Campbell K.P."/>
        </authorList>
    </citation>
    <scope>FUNCTION</scope>
    <scope>CATALYTIC ACTIVITY</scope>
</reference>
<reference key="7">
    <citation type="journal article" date="2006" name="Science">
        <title>The consensus coding sequences of human breast and colorectal cancers.</title>
        <authorList>
            <person name="Sjoeblom T."/>
            <person name="Jones S."/>
            <person name="Wood L.D."/>
            <person name="Parsons D.W."/>
            <person name="Lin J."/>
            <person name="Barber T.D."/>
            <person name="Mandelker D."/>
            <person name="Leary R.J."/>
            <person name="Ptak J."/>
            <person name="Silliman N."/>
            <person name="Szabo S."/>
            <person name="Buckhaults P."/>
            <person name="Farrell C."/>
            <person name="Meeh P."/>
            <person name="Markowitz S.D."/>
            <person name="Willis J."/>
            <person name="Dawson D."/>
            <person name="Willson J.K.V."/>
            <person name="Gazdar A.F."/>
            <person name="Hartigan J."/>
            <person name="Wu L."/>
            <person name="Liu C."/>
            <person name="Parmigiani G."/>
            <person name="Park B.H."/>
            <person name="Bachman K.E."/>
            <person name="Papadopoulos N."/>
            <person name="Vogelstein B."/>
            <person name="Kinzler K.W."/>
            <person name="Velculescu V.E."/>
        </authorList>
    </citation>
    <scope>VARIANT [LARGE SCALE ANALYSIS] SER-203</scope>
</reference>
<proteinExistence type="evidence at protein level"/>
<name>B3GL2_HUMAN</name>
<sequence>MRNWLVLLCPCVLGAALHLWLRLRSPPPACASGAGPADQLALFPQWKSTHYDVVVGVLSARNNHELRNVIRSTWMRHLLQHPTLSQRVLVKFIIGAHGCEVPVEDREDPYSCKLLNITNPVLNQEIEAFSLSEDTSSGLPEDRVVSVSFRVLYPIVITSLGVFYDANDVGFQRNITVKLYQAEQEEALFIARFSPPSCGVQVNKLWYKPVEQFILPESFEGTIVWESQDLHGLVSRNLHKVTVNDGGGVLRVITAGEGALPHEFLEGVEGVAGGFIYTIQEGDALLHNLHSRPQRLIDHIRNLHEEDALLKEESSIYDDIVFVDVVDTYRNVPAKLLNFYRWTVETTSFNLLLKTDDDCYIDLEAVFNRIVQKNLDGPNFWWGNFRLNWAVDRTGKWQELEYPSPAYPAFACGSGYVISKDIVKWLASNSGRLKTYQGEDVSMGIWMAAIGPKRYQDSLWLCEKTCETGMLSSPQYSPWELTELWKLKERCGDPCRCQAR</sequence>
<evidence type="ECO:0000250" key="1"/>
<evidence type="ECO:0000255" key="2"/>
<evidence type="ECO:0000269" key="3">
    <source>
    </source>
</evidence>
<evidence type="ECO:0000269" key="4">
    <source>
    </source>
</evidence>
<evidence type="ECO:0000269" key="5">
    <source>
    </source>
</evidence>
<evidence type="ECO:0000269" key="6">
    <source>
    </source>
</evidence>
<evidence type="ECO:0000303" key="7">
    <source>
    </source>
</evidence>
<evidence type="ECO:0000305" key="8"/>
<evidence type="ECO:0000305" key="9">
    <source>
    </source>
</evidence>
<organism>
    <name type="scientific">Homo sapiens</name>
    <name type="common">Human</name>
    <dbReference type="NCBI Taxonomy" id="9606"/>
    <lineage>
        <taxon>Eukaryota</taxon>
        <taxon>Metazoa</taxon>
        <taxon>Chordata</taxon>
        <taxon>Craniata</taxon>
        <taxon>Vertebrata</taxon>
        <taxon>Euteleostomi</taxon>
        <taxon>Mammalia</taxon>
        <taxon>Eutheria</taxon>
        <taxon>Euarchontoglires</taxon>
        <taxon>Primates</taxon>
        <taxon>Haplorrhini</taxon>
        <taxon>Catarrhini</taxon>
        <taxon>Hominidae</taxon>
        <taxon>Homo</taxon>
    </lineage>
</organism>
<protein>
    <recommendedName>
        <fullName>UDP-GalNAc:beta-1,3-N-acetylgalactosaminyltransferase 2</fullName>
        <shortName>Beta-1,3-GalNAc-T2</shortName>
        <ecNumber evidence="6">2.4.1.313</ecNumber>
    </recommendedName>
    <alternativeName>
        <fullName>Beta-1,3-N-acetylgalactosaminyltransferase II</fullName>
    </alternativeName>
</protein>
<accession>Q8NCR0</accession>
<accession>Q59GR3</accession>
<accession>Q5TCI3</accession>
<accession>Q96AL7</accession>